<comment type="function">
    <text evidence="1">Catalyzes the conversion of heme O to heme A by two successive hydroxylations of the methyl group at C8. The first hydroxylation forms heme I, the second hydroxylation results in an unstable dihydroxymethyl group, which spontaneously dehydrates, resulting in the formyl group of heme A.</text>
</comment>
<comment type="catalytic activity">
    <reaction evidence="1">
        <text>Fe(II)-heme o + 2 A + H2O = Fe(II)-heme a + 2 AH2</text>
        <dbReference type="Rhea" id="RHEA:63388"/>
        <dbReference type="ChEBI" id="CHEBI:13193"/>
        <dbReference type="ChEBI" id="CHEBI:15377"/>
        <dbReference type="ChEBI" id="CHEBI:17499"/>
        <dbReference type="ChEBI" id="CHEBI:60530"/>
        <dbReference type="ChEBI" id="CHEBI:61715"/>
        <dbReference type="EC" id="1.17.99.9"/>
    </reaction>
    <physiologicalReaction direction="left-to-right" evidence="1">
        <dbReference type="Rhea" id="RHEA:63389"/>
    </physiologicalReaction>
</comment>
<comment type="cofactor">
    <cofactor evidence="1">
        <name>heme b</name>
        <dbReference type="ChEBI" id="CHEBI:60344"/>
    </cofactor>
</comment>
<comment type="pathway">
    <text evidence="1">Porphyrin-containing compound metabolism; heme A biosynthesis; heme A from heme O: step 1/1.</text>
</comment>
<comment type="subunit">
    <text evidence="1">Interacts with CtaB.</text>
</comment>
<comment type="subcellular location">
    <subcellularLocation>
        <location evidence="1">Cell membrane</location>
        <topology evidence="1">Multi-pass membrane protein</topology>
    </subcellularLocation>
</comment>
<comment type="domain">
    <text evidence="1">The N-half (TM1-TM4) and C-half (TM5-TM8) domains are connected by an intracellular loop. Each domain is formed from four-helix bundles and they align in a pseudo twofold symmetry manner. The N-half domain is the substrate-heme O binding domain and the C-half domain is the cofactor heme B binding domain.</text>
</comment>
<comment type="domain">
    <text evidence="1">The cysteines of disulfide bond Cys-35 and Cys-42 may be involved in transfer of reducing equivalents from quinol in the membrane to the active site of the enzyme.</text>
</comment>
<comment type="similarity">
    <text evidence="1">Belongs to the COX15/CtaA family. Type 1 subfamily.</text>
</comment>
<gene>
    <name evidence="1" type="primary">ctaA</name>
    <name type="ordered locus">LMHCC_0502</name>
</gene>
<name>CTAA_LISMH</name>
<organism>
    <name type="scientific">Listeria monocytogenes serotype 4a (strain HCC23)</name>
    <dbReference type="NCBI Taxonomy" id="552536"/>
    <lineage>
        <taxon>Bacteria</taxon>
        <taxon>Bacillati</taxon>
        <taxon>Bacillota</taxon>
        <taxon>Bacilli</taxon>
        <taxon>Bacillales</taxon>
        <taxon>Listeriaceae</taxon>
        <taxon>Listeria</taxon>
    </lineage>
</organism>
<dbReference type="EC" id="1.17.99.9" evidence="1"/>
<dbReference type="EMBL" id="CP001175">
    <property type="protein sequence ID" value="ACK38859.1"/>
    <property type="molecule type" value="Genomic_DNA"/>
</dbReference>
<dbReference type="RefSeq" id="WP_003723941.1">
    <property type="nucleotide sequence ID" value="NC_011660.1"/>
</dbReference>
<dbReference type="SMR" id="B8DH71"/>
<dbReference type="KEGG" id="lmh:LMHCC_0502"/>
<dbReference type="HOGENOM" id="CLU_041525_3_1_9"/>
<dbReference type="UniPathway" id="UPA00269">
    <property type="reaction ID" value="UER00713"/>
</dbReference>
<dbReference type="GO" id="GO:0005886">
    <property type="term" value="C:plasma membrane"/>
    <property type="evidence" value="ECO:0007669"/>
    <property type="project" value="UniProtKB-SubCell"/>
</dbReference>
<dbReference type="GO" id="GO:0046872">
    <property type="term" value="F:metal ion binding"/>
    <property type="evidence" value="ECO:0007669"/>
    <property type="project" value="UniProtKB-KW"/>
</dbReference>
<dbReference type="GO" id="GO:0016653">
    <property type="term" value="F:oxidoreductase activity, acting on NAD(P)H, heme protein as acceptor"/>
    <property type="evidence" value="ECO:0007669"/>
    <property type="project" value="InterPro"/>
</dbReference>
<dbReference type="GO" id="GO:0006784">
    <property type="term" value="P:heme A biosynthetic process"/>
    <property type="evidence" value="ECO:0007669"/>
    <property type="project" value="UniProtKB-UniRule"/>
</dbReference>
<dbReference type="HAMAP" id="MF_01664">
    <property type="entry name" value="HemeA_synth_type1"/>
    <property type="match status" value="1"/>
</dbReference>
<dbReference type="InterPro" id="IPR003780">
    <property type="entry name" value="COX15/CtaA_fam"/>
</dbReference>
<dbReference type="InterPro" id="IPR050450">
    <property type="entry name" value="COX15/CtaA_HemeA_synthase"/>
</dbReference>
<dbReference type="InterPro" id="IPR023755">
    <property type="entry name" value="HemeA_Synthase_type1"/>
</dbReference>
<dbReference type="PANTHER" id="PTHR35457">
    <property type="entry name" value="HEME A SYNTHASE"/>
    <property type="match status" value="1"/>
</dbReference>
<dbReference type="PANTHER" id="PTHR35457:SF1">
    <property type="entry name" value="HEME A SYNTHASE"/>
    <property type="match status" value="1"/>
</dbReference>
<dbReference type="Pfam" id="PF02628">
    <property type="entry name" value="COX15-CtaA"/>
    <property type="match status" value="1"/>
</dbReference>
<feature type="chain" id="PRO_1000187242" description="Heme A synthase">
    <location>
        <begin position="1"/>
        <end position="305"/>
    </location>
</feature>
<feature type="topological domain" description="Cytoplasmic" evidence="1">
    <location>
        <begin position="1"/>
        <end position="6"/>
    </location>
</feature>
<feature type="transmembrane region" description="Helical" evidence="1">
    <location>
        <begin position="7"/>
        <end position="27"/>
    </location>
</feature>
<feature type="topological domain" description="Extracellular" evidence="1">
    <location>
        <begin position="28"/>
        <end position="63"/>
    </location>
</feature>
<feature type="transmembrane region" description="Helical" evidence="1">
    <location>
        <begin position="64"/>
        <end position="84"/>
    </location>
</feature>
<feature type="topological domain" description="Cytoplasmic" evidence="1">
    <location>
        <begin position="85"/>
        <end position="92"/>
    </location>
</feature>
<feature type="transmembrane region" description="Helical" evidence="1">
    <location>
        <begin position="93"/>
        <end position="113"/>
    </location>
</feature>
<feature type="topological domain" description="Extracellular" evidence="1">
    <location>
        <begin position="114"/>
        <end position="122"/>
    </location>
</feature>
<feature type="transmembrane region" description="Helical" evidence="1">
    <location>
        <begin position="123"/>
        <end position="143"/>
    </location>
</feature>
<feature type="topological domain" description="Cytoplasmic" evidence="1">
    <location>
        <begin position="144"/>
        <end position="160"/>
    </location>
</feature>
<feature type="transmembrane region" description="Helical" evidence="1">
    <location>
        <begin position="161"/>
        <end position="181"/>
    </location>
</feature>
<feature type="topological domain" description="Extracellular" evidence="1">
    <location>
        <begin position="182"/>
        <end position="212"/>
    </location>
</feature>
<feature type="transmembrane region" description="Helical" evidence="1">
    <location>
        <begin position="213"/>
        <end position="233"/>
    </location>
</feature>
<feature type="topological domain" description="Cytoplasmic" evidence="1">
    <location>
        <begin position="234"/>
        <end position="240"/>
    </location>
</feature>
<feature type="transmembrane region" description="Helical" evidence="1">
    <location>
        <begin position="241"/>
        <end position="261"/>
    </location>
</feature>
<feature type="topological domain" description="Extracellular" evidence="1">
    <location>
        <begin position="262"/>
        <end position="271"/>
    </location>
</feature>
<feature type="transmembrane region" description="Helical" evidence="1">
    <location>
        <begin position="272"/>
        <end position="292"/>
    </location>
</feature>
<feature type="topological domain" description="Cytoplasmic" evidence="1">
    <location>
        <begin position="293"/>
        <end position="305"/>
    </location>
</feature>
<feature type="active site" evidence="1">
    <location>
        <position position="59"/>
    </location>
</feature>
<feature type="binding site" description="axial binding residue" evidence="1">
    <location>
        <position position="62"/>
    </location>
    <ligand>
        <name>heme o</name>
        <dbReference type="ChEBI" id="CHEBI:24480"/>
    </ligand>
    <ligandPart>
        <name>Fe</name>
        <dbReference type="ChEBI" id="CHEBI:18248"/>
    </ligandPart>
</feature>
<feature type="binding site" description="axial binding residue" evidence="1">
    <location>
        <position position="124"/>
    </location>
    <ligand>
        <name>heme o</name>
        <dbReference type="ChEBI" id="CHEBI:24480"/>
    </ligand>
    <ligandPart>
        <name>Fe</name>
        <dbReference type="ChEBI" id="CHEBI:18248"/>
    </ligandPart>
</feature>
<feature type="binding site" description="axial binding residue" evidence="1">
    <location>
        <position position="214"/>
    </location>
    <ligand>
        <name>heme b</name>
        <dbReference type="ChEBI" id="CHEBI:60344"/>
    </ligand>
    <ligandPart>
        <name>Fe</name>
        <dbReference type="ChEBI" id="CHEBI:18248"/>
    </ligandPart>
</feature>
<feature type="binding site" description="axial binding residue" evidence="1">
    <location>
        <position position="276"/>
    </location>
    <ligand>
        <name>heme b</name>
        <dbReference type="ChEBI" id="CHEBI:60344"/>
    </ligand>
    <ligandPart>
        <name>Fe</name>
        <dbReference type="ChEBI" id="CHEBI:18248"/>
    </ligandPart>
</feature>
<feature type="disulfide bond" description="Essential for catalytic activity" evidence="1">
    <location>
        <begin position="35"/>
        <end position="42"/>
    </location>
</feature>
<protein>
    <recommendedName>
        <fullName evidence="1">Heme A synthase</fullName>
        <shortName evidence="1">HAS</shortName>
        <ecNumber evidence="1">1.17.99.9</ecNumber>
    </recommendedName>
    <alternativeName>
        <fullName evidence="1">Cytochrome aa3-controlling protein</fullName>
    </alternativeName>
</protein>
<reference key="1">
    <citation type="journal article" date="2011" name="J. Bacteriol.">
        <title>Genome sequence of lineage III Listeria monocytogenes strain HCC23.</title>
        <authorList>
            <person name="Steele C.L."/>
            <person name="Donaldson J.R."/>
            <person name="Paul D."/>
            <person name="Banes M.M."/>
            <person name="Arick T."/>
            <person name="Bridges S.M."/>
            <person name="Lawrence M.L."/>
        </authorList>
    </citation>
    <scope>NUCLEOTIDE SEQUENCE [LARGE SCALE GENOMIC DNA]</scope>
    <source>
        <strain>HCC23</strain>
    </source>
</reference>
<keyword id="KW-1003">Cell membrane</keyword>
<keyword id="KW-1015">Disulfide bond</keyword>
<keyword id="KW-0350">Heme biosynthesis</keyword>
<keyword id="KW-0408">Iron</keyword>
<keyword id="KW-0472">Membrane</keyword>
<keyword id="KW-0479">Metal-binding</keyword>
<keyword id="KW-0560">Oxidoreductase</keyword>
<keyword id="KW-0812">Transmembrane</keyword>
<keyword id="KW-1133">Transmembrane helix</keyword>
<proteinExistence type="inferred from homology"/>
<sequence length="305" mass="34567">MKKFLKVWSVLTIICMTVVVFGGALVTKTGSADGCGNSWPLCNGQLVRLTDVTPEKLIEFMHRMTTGISSIFVIVLAICAWIYMKNRRETKPLAIIAVLFLIIQALMGMAAVVWGQNPYIMALHFGISIICYASIVLLALMIFEVDRKFDARNLVMGTKLRINIYALTIYTYLAVYTGALVRHEKASMAVPVWPFENGHFIMPTSVQDYVQYFHRLAAFILIVWLLYVTWLVFRDYRRYRVLTFSMVLSLVFIALQAVTGALSVYTGVNLYIALAHSLIITMLFALLCYLCLLASRSKSNRLRIK</sequence>
<accession>B8DH71</accession>
<evidence type="ECO:0000255" key="1">
    <source>
        <dbReference type="HAMAP-Rule" id="MF_01664"/>
    </source>
</evidence>